<name>ISPE_MYCTA</name>
<evidence type="ECO:0000250" key="1">
    <source>
        <dbReference type="UniProtKB" id="P9WKG7"/>
    </source>
</evidence>
<evidence type="ECO:0000255" key="2">
    <source>
        <dbReference type="HAMAP-Rule" id="MF_00061"/>
    </source>
</evidence>
<feature type="chain" id="PRO_1000007862" description="4-diphosphocytidyl-2-C-methyl-D-erythritol kinase">
    <location>
        <begin position="1"/>
        <end position="318"/>
    </location>
</feature>
<feature type="active site" evidence="2">
    <location>
        <position position="25"/>
    </location>
</feature>
<feature type="active site" evidence="2">
    <location>
        <position position="152"/>
    </location>
</feature>
<feature type="binding site" evidence="2">
    <location>
        <begin position="110"/>
        <end position="120"/>
    </location>
    <ligand>
        <name>ATP</name>
        <dbReference type="ChEBI" id="CHEBI:30616"/>
    </ligand>
</feature>
<gene>
    <name evidence="2" type="primary">ispE</name>
    <name type="ordered locus">MRA_1020</name>
</gene>
<keyword id="KW-0067">ATP-binding</keyword>
<keyword id="KW-0414">Isoprene biosynthesis</keyword>
<keyword id="KW-0418">Kinase</keyword>
<keyword id="KW-0547">Nucleotide-binding</keyword>
<keyword id="KW-1185">Reference proteome</keyword>
<keyword id="KW-0808">Transferase</keyword>
<accession>A5U154</accession>
<dbReference type="EC" id="2.7.1.148" evidence="2"/>
<dbReference type="EMBL" id="CP000611">
    <property type="protein sequence ID" value="ABQ72754.1"/>
    <property type="status" value="ALT_INIT"/>
    <property type="molecule type" value="Genomic_DNA"/>
</dbReference>
<dbReference type="RefSeq" id="WP_003898690.1">
    <property type="nucleotide sequence ID" value="NZ_CP016972.1"/>
</dbReference>
<dbReference type="SMR" id="A5U154"/>
<dbReference type="KEGG" id="mra:MRA_1020"/>
<dbReference type="eggNOG" id="COG1947">
    <property type="taxonomic scope" value="Bacteria"/>
</dbReference>
<dbReference type="HOGENOM" id="CLU_053057_1_1_11"/>
<dbReference type="UniPathway" id="UPA00056">
    <property type="reaction ID" value="UER00094"/>
</dbReference>
<dbReference type="Proteomes" id="UP000001988">
    <property type="component" value="Chromosome"/>
</dbReference>
<dbReference type="GO" id="GO:0050515">
    <property type="term" value="F:4-(cytidine 5'-diphospho)-2-C-methyl-D-erythritol kinase activity"/>
    <property type="evidence" value="ECO:0007669"/>
    <property type="project" value="UniProtKB-UniRule"/>
</dbReference>
<dbReference type="GO" id="GO:0005524">
    <property type="term" value="F:ATP binding"/>
    <property type="evidence" value="ECO:0007669"/>
    <property type="project" value="UniProtKB-UniRule"/>
</dbReference>
<dbReference type="GO" id="GO:0019288">
    <property type="term" value="P:isopentenyl diphosphate biosynthetic process, methylerythritol 4-phosphate pathway"/>
    <property type="evidence" value="ECO:0007669"/>
    <property type="project" value="UniProtKB-UniRule"/>
</dbReference>
<dbReference type="GO" id="GO:0016114">
    <property type="term" value="P:terpenoid biosynthetic process"/>
    <property type="evidence" value="ECO:0007669"/>
    <property type="project" value="InterPro"/>
</dbReference>
<dbReference type="FunFam" id="3.30.230.10:FF:000076">
    <property type="entry name" value="4-diphosphocytidyl-2-C-methyl-D-erythritol kinase"/>
    <property type="match status" value="1"/>
</dbReference>
<dbReference type="FunFam" id="3.30.70.890:FF:000013">
    <property type="entry name" value="4-diphosphocytidyl-2-C-methyl-D-erythritol kinase"/>
    <property type="match status" value="1"/>
</dbReference>
<dbReference type="Gene3D" id="3.30.230.10">
    <property type="match status" value="1"/>
</dbReference>
<dbReference type="Gene3D" id="3.30.70.890">
    <property type="entry name" value="GHMP kinase, C-terminal domain"/>
    <property type="match status" value="1"/>
</dbReference>
<dbReference type="HAMAP" id="MF_00061">
    <property type="entry name" value="IspE"/>
    <property type="match status" value="1"/>
</dbReference>
<dbReference type="InterPro" id="IPR013750">
    <property type="entry name" value="GHMP_kinase_C_dom"/>
</dbReference>
<dbReference type="InterPro" id="IPR036554">
    <property type="entry name" value="GHMP_kinase_C_sf"/>
</dbReference>
<dbReference type="InterPro" id="IPR006204">
    <property type="entry name" value="GHMP_kinase_N_dom"/>
</dbReference>
<dbReference type="InterPro" id="IPR004424">
    <property type="entry name" value="IspE"/>
</dbReference>
<dbReference type="InterPro" id="IPR020568">
    <property type="entry name" value="Ribosomal_Su5_D2-typ_SF"/>
</dbReference>
<dbReference type="InterPro" id="IPR014721">
    <property type="entry name" value="Ribsml_uS5_D2-typ_fold_subgr"/>
</dbReference>
<dbReference type="NCBIfam" id="TIGR00154">
    <property type="entry name" value="ispE"/>
    <property type="match status" value="1"/>
</dbReference>
<dbReference type="NCBIfam" id="NF002870">
    <property type="entry name" value="PRK03188.1"/>
    <property type="match status" value="1"/>
</dbReference>
<dbReference type="PANTHER" id="PTHR43527">
    <property type="entry name" value="4-DIPHOSPHOCYTIDYL-2-C-METHYL-D-ERYTHRITOL KINASE, CHLOROPLASTIC"/>
    <property type="match status" value="1"/>
</dbReference>
<dbReference type="PANTHER" id="PTHR43527:SF2">
    <property type="entry name" value="4-DIPHOSPHOCYTIDYL-2-C-METHYL-D-ERYTHRITOL KINASE, CHLOROPLASTIC"/>
    <property type="match status" value="1"/>
</dbReference>
<dbReference type="Pfam" id="PF08544">
    <property type="entry name" value="GHMP_kinases_C"/>
    <property type="match status" value="1"/>
</dbReference>
<dbReference type="Pfam" id="PF00288">
    <property type="entry name" value="GHMP_kinases_N"/>
    <property type="match status" value="1"/>
</dbReference>
<dbReference type="PIRSF" id="PIRSF010376">
    <property type="entry name" value="IspE"/>
    <property type="match status" value="1"/>
</dbReference>
<dbReference type="SUPFAM" id="SSF55060">
    <property type="entry name" value="GHMP Kinase, C-terminal domain"/>
    <property type="match status" value="1"/>
</dbReference>
<dbReference type="SUPFAM" id="SSF54211">
    <property type="entry name" value="Ribosomal protein S5 domain 2-like"/>
    <property type="match status" value="1"/>
</dbReference>
<organism>
    <name type="scientific">Mycobacterium tuberculosis (strain ATCC 25177 / H37Ra)</name>
    <dbReference type="NCBI Taxonomy" id="419947"/>
    <lineage>
        <taxon>Bacteria</taxon>
        <taxon>Bacillati</taxon>
        <taxon>Actinomycetota</taxon>
        <taxon>Actinomycetes</taxon>
        <taxon>Mycobacteriales</taxon>
        <taxon>Mycobacteriaceae</taxon>
        <taxon>Mycobacterium</taxon>
        <taxon>Mycobacterium tuberculosis complex</taxon>
    </lineage>
</organism>
<reference key="1">
    <citation type="journal article" date="2008" name="PLoS ONE">
        <title>Genetic basis of virulence attenuation revealed by comparative genomic analysis of Mycobacterium tuberculosis strain H37Ra versus H37Rv.</title>
        <authorList>
            <person name="Zheng H."/>
            <person name="Lu L."/>
            <person name="Wang B."/>
            <person name="Pu S."/>
            <person name="Zhang X."/>
            <person name="Zhu G."/>
            <person name="Shi W."/>
            <person name="Zhang L."/>
            <person name="Wang H."/>
            <person name="Wang S."/>
            <person name="Zhao G."/>
            <person name="Zhang Y."/>
        </authorList>
    </citation>
    <scope>NUCLEOTIDE SEQUENCE [LARGE SCALE GENOMIC DNA]</scope>
    <source>
        <strain>ATCC 25177 / H37Ra</strain>
    </source>
</reference>
<sequence length="318" mass="32613">MSASDGNTAELWVPTGSVTVRVPGKVNLYLAVGDRREDGYHELTTVFHAVSLVDEVTVRNADVLSLELVGEGADQLPTDERNLAWQAAELMAEHVGRAPDVSIMIDKSIPVAGGMAGGSADAAAVLVAMNSLWELNVPRRDLRMLAARLGSDVPFALHGGTALGTGRGEELATVLSRNTFHWVLAFADSGLLTSAVYNELDRLREVGDPPRLGEPGPVLAALAAGDPDQLAPLLGNEMQAAAVSLDPALARALRAGVEAGALAGIVSGSGPTCAFLCTSASSAIDVGAQLSGAGVCRTVRVATGPVPGARVVSAPTEV</sequence>
<proteinExistence type="inferred from homology"/>
<comment type="function">
    <text evidence="2">Catalyzes the phosphorylation of the position 2 hydroxy group of 4-diphosphocytidyl-2C-methyl-D-erythritol.</text>
</comment>
<comment type="catalytic activity">
    <reaction evidence="2">
        <text>4-CDP-2-C-methyl-D-erythritol + ATP = 4-CDP-2-C-methyl-D-erythritol 2-phosphate + ADP + H(+)</text>
        <dbReference type="Rhea" id="RHEA:18437"/>
        <dbReference type="ChEBI" id="CHEBI:15378"/>
        <dbReference type="ChEBI" id="CHEBI:30616"/>
        <dbReference type="ChEBI" id="CHEBI:57823"/>
        <dbReference type="ChEBI" id="CHEBI:57919"/>
        <dbReference type="ChEBI" id="CHEBI:456216"/>
        <dbReference type="EC" id="2.7.1.148"/>
    </reaction>
</comment>
<comment type="pathway">
    <text evidence="2">Isoprenoid biosynthesis; isopentenyl diphosphate biosynthesis via DXP pathway; isopentenyl diphosphate from 1-deoxy-D-xylulose 5-phosphate: step 3/6.</text>
</comment>
<comment type="similarity">
    <text evidence="2">Belongs to the GHMP kinase family. IspE subfamily.</text>
</comment>
<comment type="sequence caution" evidence="1">
    <conflict type="erroneous initiation">
        <sequence resource="EMBL-CDS" id="ABQ72754"/>
    </conflict>
    <text>Truncated N-terminus.</text>
</comment>
<protein>
    <recommendedName>
        <fullName evidence="2">4-diphosphocytidyl-2-C-methyl-D-erythritol kinase</fullName>
        <shortName evidence="2">CMK</shortName>
        <ecNumber evidence="2">2.7.1.148</ecNumber>
    </recommendedName>
    <alternativeName>
        <fullName evidence="2">4-(cytidine-5'-diphospho)-2-C-methyl-D-erythritol kinase</fullName>
    </alternativeName>
</protein>